<name>Y810_STAAE</name>
<evidence type="ECO:0000255" key="1">
    <source>
        <dbReference type="HAMAP-Rule" id="MF_01542"/>
    </source>
</evidence>
<gene>
    <name type="ordered locus">NWMN_0810</name>
</gene>
<comment type="similarity">
    <text evidence="1">Belongs to the UPF0349 family.</text>
</comment>
<accession>A6QFF0</accession>
<protein>
    <recommendedName>
        <fullName evidence="1">UPF0349 protein NWMN_0810</fullName>
    </recommendedName>
</protein>
<sequence>MNPIVEFCLSNMAKGGDYVFNQLENDPDVDVLEYGCLTHCGICSAGLYALVNGDIVEGDSPEELLQNIYAHIKETWIF</sequence>
<dbReference type="EMBL" id="AP009351">
    <property type="protein sequence ID" value="BAF67082.1"/>
    <property type="molecule type" value="Genomic_DNA"/>
</dbReference>
<dbReference type="RefSeq" id="WP_001068337.1">
    <property type="nucleotide sequence ID" value="NZ_JBBIAE010000002.1"/>
</dbReference>
<dbReference type="SMR" id="A6QFF0"/>
<dbReference type="KEGG" id="sae:NWMN_0810"/>
<dbReference type="HOGENOM" id="CLU_182025_0_0_9"/>
<dbReference type="Proteomes" id="UP000006386">
    <property type="component" value="Chromosome"/>
</dbReference>
<dbReference type="HAMAP" id="MF_01542">
    <property type="entry name" value="UPF0349"/>
    <property type="match status" value="1"/>
</dbReference>
<dbReference type="InterPro" id="IPR009910">
    <property type="entry name" value="DUF1450"/>
</dbReference>
<dbReference type="InterPro" id="IPR022916">
    <property type="entry name" value="UPF0349"/>
</dbReference>
<dbReference type="NCBIfam" id="NF010190">
    <property type="entry name" value="PRK13669.1"/>
    <property type="match status" value="1"/>
</dbReference>
<dbReference type="Pfam" id="PF07293">
    <property type="entry name" value="DUF1450"/>
    <property type="match status" value="1"/>
</dbReference>
<organism>
    <name type="scientific">Staphylococcus aureus (strain Newman)</name>
    <dbReference type="NCBI Taxonomy" id="426430"/>
    <lineage>
        <taxon>Bacteria</taxon>
        <taxon>Bacillati</taxon>
        <taxon>Bacillota</taxon>
        <taxon>Bacilli</taxon>
        <taxon>Bacillales</taxon>
        <taxon>Staphylococcaceae</taxon>
        <taxon>Staphylococcus</taxon>
    </lineage>
</organism>
<reference key="1">
    <citation type="journal article" date="2008" name="J. Bacteriol.">
        <title>Genome sequence of Staphylococcus aureus strain Newman and comparative analysis of staphylococcal genomes: polymorphism and evolution of two major pathogenicity islands.</title>
        <authorList>
            <person name="Baba T."/>
            <person name="Bae T."/>
            <person name="Schneewind O."/>
            <person name="Takeuchi F."/>
            <person name="Hiramatsu K."/>
        </authorList>
    </citation>
    <scope>NUCLEOTIDE SEQUENCE [LARGE SCALE GENOMIC DNA]</scope>
    <source>
        <strain>Newman</strain>
    </source>
</reference>
<proteinExistence type="inferred from homology"/>
<feature type="chain" id="PRO_1000073553" description="UPF0349 protein NWMN_0810">
    <location>
        <begin position="1"/>
        <end position="78"/>
    </location>
</feature>